<feature type="chain" id="PRO_0000262348" description="N-succinylarginine dihydrolase">
    <location>
        <begin position="1"/>
        <end position="447"/>
    </location>
</feature>
<feature type="active site" evidence="1">
    <location>
        <position position="176"/>
    </location>
</feature>
<feature type="active site" evidence="1">
    <location>
        <position position="251"/>
    </location>
</feature>
<feature type="active site" description="Nucleophile" evidence="1">
    <location>
        <position position="370"/>
    </location>
</feature>
<feature type="binding site" evidence="1">
    <location>
        <begin position="21"/>
        <end position="30"/>
    </location>
    <ligand>
        <name>substrate</name>
    </ligand>
</feature>
<feature type="binding site" evidence="1">
    <location>
        <position position="112"/>
    </location>
    <ligand>
        <name>substrate</name>
    </ligand>
</feature>
<feature type="binding site" evidence="1">
    <location>
        <begin position="139"/>
        <end position="140"/>
    </location>
    <ligand>
        <name>substrate</name>
    </ligand>
</feature>
<feature type="binding site" evidence="1">
    <location>
        <position position="215"/>
    </location>
    <ligand>
        <name>substrate</name>
    </ligand>
</feature>
<feature type="binding site" evidence="1">
    <location>
        <position position="253"/>
    </location>
    <ligand>
        <name>substrate</name>
    </ligand>
</feature>
<feature type="binding site" evidence="1">
    <location>
        <position position="364"/>
    </location>
    <ligand>
        <name>substrate</name>
    </ligand>
</feature>
<sequence>MSQDVREVNFDGLVGPTHNYAGLAHGNVASMRHGGLTANPREAALQGLAKMKSLMEAGFAQGVLPPQQRPDLGALRDLGFTGDDAGVLAQAARQAPQLLRAVCSASSMWTANAATVTPSLDAPDGRVHFTAANLQSSFHRYLEPRTTARVLAAMFHDPAHFAHHPVLPATPTFSDEGAANHTRLCGDHDEPGVHLYVYGRQAFGGEHGPKRYPARQTLEASQAIARQHGLDDTRTVFAQQHPDAIDAGVFHNDVIAVGNGPVLLYHEMAFRDETATLEALRARMSTPLIPVRVPSEAISLEDAVATYLFNSQLLSNPDGSMTLVVPGECQENETVWRTIQDLLLGGNNPISEVLVKDVKQSMRNGGGPACLRLRVALAARERQALTGRVLLDEALHDDLAAWVERHYRDRLAPEDLADPLLVRESLTALDELTQLLGIGAVYPFQLN</sequence>
<name>ASTB_CHRSD</name>
<accession>Q1QTQ8</accession>
<evidence type="ECO:0000255" key="1">
    <source>
        <dbReference type="HAMAP-Rule" id="MF_01172"/>
    </source>
</evidence>
<dbReference type="EC" id="3.5.3.23" evidence="1"/>
<dbReference type="EMBL" id="CP000285">
    <property type="protein sequence ID" value="ABE60150.1"/>
    <property type="molecule type" value="Genomic_DNA"/>
</dbReference>
<dbReference type="RefSeq" id="WP_011508096.1">
    <property type="nucleotide sequence ID" value="NC_007963.1"/>
</dbReference>
<dbReference type="SMR" id="Q1QTQ8"/>
<dbReference type="STRING" id="290398.Csal_2804"/>
<dbReference type="GeneID" id="95335498"/>
<dbReference type="KEGG" id="csa:Csal_2804"/>
<dbReference type="eggNOG" id="COG3724">
    <property type="taxonomic scope" value="Bacteria"/>
</dbReference>
<dbReference type="HOGENOM" id="CLU_053835_0_0_6"/>
<dbReference type="OrthoDB" id="248552at2"/>
<dbReference type="UniPathway" id="UPA00185">
    <property type="reaction ID" value="UER00280"/>
</dbReference>
<dbReference type="Proteomes" id="UP000000239">
    <property type="component" value="Chromosome"/>
</dbReference>
<dbReference type="GO" id="GO:0009015">
    <property type="term" value="F:N-succinylarginine dihydrolase activity"/>
    <property type="evidence" value="ECO:0007669"/>
    <property type="project" value="UniProtKB-UniRule"/>
</dbReference>
<dbReference type="GO" id="GO:0019544">
    <property type="term" value="P:arginine catabolic process to glutamate"/>
    <property type="evidence" value="ECO:0007669"/>
    <property type="project" value="UniProtKB-UniRule"/>
</dbReference>
<dbReference type="GO" id="GO:0019545">
    <property type="term" value="P:arginine catabolic process to succinate"/>
    <property type="evidence" value="ECO:0007669"/>
    <property type="project" value="UniProtKB-UniRule"/>
</dbReference>
<dbReference type="Gene3D" id="3.75.10.20">
    <property type="entry name" value="Succinylarginine dihydrolase"/>
    <property type="match status" value="1"/>
</dbReference>
<dbReference type="HAMAP" id="MF_01172">
    <property type="entry name" value="AstB"/>
    <property type="match status" value="1"/>
</dbReference>
<dbReference type="InterPro" id="IPR037031">
    <property type="entry name" value="AstB_sf"/>
</dbReference>
<dbReference type="InterPro" id="IPR007079">
    <property type="entry name" value="SuccinylArg_d-Hdrlase_AstB"/>
</dbReference>
<dbReference type="NCBIfam" id="TIGR03241">
    <property type="entry name" value="arg_catab_astB"/>
    <property type="match status" value="1"/>
</dbReference>
<dbReference type="NCBIfam" id="NF009789">
    <property type="entry name" value="PRK13281.1"/>
    <property type="match status" value="1"/>
</dbReference>
<dbReference type="PANTHER" id="PTHR30420">
    <property type="entry name" value="N-SUCCINYLARGININE DIHYDROLASE"/>
    <property type="match status" value="1"/>
</dbReference>
<dbReference type="PANTHER" id="PTHR30420:SF2">
    <property type="entry name" value="N-SUCCINYLARGININE DIHYDROLASE"/>
    <property type="match status" value="1"/>
</dbReference>
<dbReference type="Pfam" id="PF04996">
    <property type="entry name" value="AstB"/>
    <property type="match status" value="1"/>
</dbReference>
<dbReference type="SUPFAM" id="SSF55909">
    <property type="entry name" value="Pentein"/>
    <property type="match status" value="1"/>
</dbReference>
<proteinExistence type="inferred from homology"/>
<keyword id="KW-0056">Arginine metabolism</keyword>
<keyword id="KW-0378">Hydrolase</keyword>
<keyword id="KW-1185">Reference proteome</keyword>
<gene>
    <name evidence="1" type="primary">astB</name>
    <name type="ordered locus">Csal_2804</name>
</gene>
<comment type="function">
    <text evidence="1">Catalyzes the hydrolysis of N(2)-succinylarginine into N(2)-succinylornithine, ammonia and CO(2).</text>
</comment>
<comment type="catalytic activity">
    <reaction evidence="1">
        <text>N(2)-succinyl-L-arginine + 2 H2O + 2 H(+) = N(2)-succinyl-L-ornithine + 2 NH4(+) + CO2</text>
        <dbReference type="Rhea" id="RHEA:19533"/>
        <dbReference type="ChEBI" id="CHEBI:15377"/>
        <dbReference type="ChEBI" id="CHEBI:15378"/>
        <dbReference type="ChEBI" id="CHEBI:16526"/>
        <dbReference type="ChEBI" id="CHEBI:28938"/>
        <dbReference type="ChEBI" id="CHEBI:58241"/>
        <dbReference type="ChEBI" id="CHEBI:58514"/>
        <dbReference type="EC" id="3.5.3.23"/>
    </reaction>
</comment>
<comment type="pathway">
    <text evidence="1">Amino-acid degradation; L-arginine degradation via AST pathway; L-glutamate and succinate from L-arginine: step 2/5.</text>
</comment>
<comment type="subunit">
    <text evidence="1">Homodimer.</text>
</comment>
<comment type="similarity">
    <text evidence="1">Belongs to the succinylarginine dihydrolase family.</text>
</comment>
<reference key="1">
    <citation type="journal article" date="2011" name="Stand. Genomic Sci.">
        <title>Complete genome sequence of the halophilic and highly halotolerant Chromohalobacter salexigens type strain (1H11(T)).</title>
        <authorList>
            <person name="Copeland A."/>
            <person name="O'Connor K."/>
            <person name="Lucas S."/>
            <person name="Lapidus A."/>
            <person name="Berry K.W."/>
            <person name="Detter J.C."/>
            <person name="Del Rio T.G."/>
            <person name="Hammon N."/>
            <person name="Dalin E."/>
            <person name="Tice H."/>
            <person name="Pitluck S."/>
            <person name="Bruce D."/>
            <person name="Goodwin L."/>
            <person name="Han C."/>
            <person name="Tapia R."/>
            <person name="Saunders E."/>
            <person name="Schmutz J."/>
            <person name="Brettin T."/>
            <person name="Larimer F."/>
            <person name="Land M."/>
            <person name="Hauser L."/>
            <person name="Vargas C."/>
            <person name="Nieto J.J."/>
            <person name="Kyrpides N.C."/>
            <person name="Ivanova N."/>
            <person name="Goker M."/>
            <person name="Klenk H.P."/>
            <person name="Csonka L.N."/>
            <person name="Woyke T."/>
        </authorList>
    </citation>
    <scope>NUCLEOTIDE SEQUENCE [LARGE SCALE GENOMIC DNA]</scope>
    <source>
        <strain>ATCC BAA-138 / DSM 3043 / CIP 106854 / NCIMB 13768 / 1H11</strain>
    </source>
</reference>
<protein>
    <recommendedName>
        <fullName evidence="1">N-succinylarginine dihydrolase</fullName>
        <ecNumber evidence="1">3.5.3.23</ecNumber>
    </recommendedName>
</protein>
<organism>
    <name type="scientific">Chromohalobacter salexigens (strain ATCC BAA-138 / DSM 3043 / CIP 106854 / NCIMB 13768 / 1H11)</name>
    <dbReference type="NCBI Taxonomy" id="290398"/>
    <lineage>
        <taxon>Bacteria</taxon>
        <taxon>Pseudomonadati</taxon>
        <taxon>Pseudomonadota</taxon>
        <taxon>Gammaproteobacteria</taxon>
        <taxon>Oceanospirillales</taxon>
        <taxon>Halomonadaceae</taxon>
        <taxon>Chromohalobacter</taxon>
    </lineage>
</organism>